<gene>
    <name evidence="9" type="primary">Cyp4a14</name>
    <name type="synonym">Cyp4a-3</name>
    <name evidence="6" type="synonym">Cyp4a3</name>
</gene>
<keyword id="KW-0903">Direct protein sequencing</keyword>
<keyword id="KW-0256">Endoplasmic reticulum</keyword>
<keyword id="KW-0349">Heme</keyword>
<keyword id="KW-0408">Iron</keyword>
<keyword id="KW-0472">Membrane</keyword>
<keyword id="KW-0479">Metal-binding</keyword>
<keyword id="KW-0492">Microsome</keyword>
<keyword id="KW-0503">Monooxygenase</keyword>
<keyword id="KW-0521">NADP</keyword>
<keyword id="KW-0560">Oxidoreductase</keyword>
<keyword id="KW-0597">Phosphoprotein</keyword>
<keyword id="KW-1185">Reference proteome</keyword>
<organism>
    <name type="scientific">Rattus norvegicus</name>
    <name type="common">Rat</name>
    <dbReference type="NCBI Taxonomy" id="10116"/>
    <lineage>
        <taxon>Eukaryota</taxon>
        <taxon>Metazoa</taxon>
        <taxon>Chordata</taxon>
        <taxon>Craniata</taxon>
        <taxon>Vertebrata</taxon>
        <taxon>Euteleostomi</taxon>
        <taxon>Mammalia</taxon>
        <taxon>Eutheria</taxon>
        <taxon>Euarchontoglires</taxon>
        <taxon>Glires</taxon>
        <taxon>Rodentia</taxon>
        <taxon>Myomorpha</taxon>
        <taxon>Muroidea</taxon>
        <taxon>Muridae</taxon>
        <taxon>Murinae</taxon>
        <taxon>Rattus</taxon>
    </lineage>
</organism>
<name>CP4AE_RAT</name>
<dbReference type="EC" id="1.14.14.80" evidence="1"/>
<dbReference type="EMBL" id="M33936">
    <property type="protein sequence ID" value="AAA41458.1"/>
    <property type="molecule type" value="mRNA"/>
</dbReference>
<dbReference type="PIR" id="A32966">
    <property type="entry name" value="A32966"/>
</dbReference>
<dbReference type="PIR" id="PC4351">
    <property type="entry name" value="PC4351"/>
</dbReference>
<dbReference type="RefSeq" id="NP_786936.1">
    <property type="nucleotide sequence ID" value="NM_175760.2"/>
</dbReference>
<dbReference type="SMR" id="P20817"/>
<dbReference type="FunCoup" id="P20817">
    <property type="interactions" value="121"/>
</dbReference>
<dbReference type="SwissLipids" id="SLP:000000744"/>
<dbReference type="GlyGen" id="P20817">
    <property type="glycosylation" value="1 site"/>
</dbReference>
<dbReference type="iPTMnet" id="P20817"/>
<dbReference type="PhosphoSitePlus" id="P20817"/>
<dbReference type="GeneID" id="298423"/>
<dbReference type="KEGG" id="rno:298423"/>
<dbReference type="UCSC" id="RGD:631356">
    <property type="organism name" value="rat"/>
</dbReference>
<dbReference type="AGR" id="RGD:631356"/>
<dbReference type="CTD" id="298423"/>
<dbReference type="RGD" id="631356">
    <property type="gene designation" value="Cyp4a3"/>
</dbReference>
<dbReference type="InParanoid" id="P20817"/>
<dbReference type="OrthoDB" id="1470350at2759"/>
<dbReference type="PhylomeDB" id="P20817"/>
<dbReference type="BRENDA" id="1.14.14.80">
    <property type="organism ID" value="5301"/>
</dbReference>
<dbReference type="Reactome" id="R-RNO-211935">
    <property type="pathway name" value="Fatty acids"/>
</dbReference>
<dbReference type="Reactome" id="R-RNO-211958">
    <property type="pathway name" value="Miscellaneous substrates"/>
</dbReference>
<dbReference type="Reactome" id="R-RNO-211979">
    <property type="pathway name" value="Eicosanoids"/>
</dbReference>
<dbReference type="Reactome" id="R-RNO-2142691">
    <property type="pathway name" value="Synthesis of Leukotrienes (LT) and Eoxins (EX)"/>
</dbReference>
<dbReference type="UniPathway" id="UPA00199"/>
<dbReference type="PRO" id="PR:P20817"/>
<dbReference type="Proteomes" id="UP000002494">
    <property type="component" value="Unplaced"/>
</dbReference>
<dbReference type="GO" id="GO:0005789">
    <property type="term" value="C:endoplasmic reticulum membrane"/>
    <property type="evidence" value="ECO:0007669"/>
    <property type="project" value="UniProtKB-SubCell"/>
</dbReference>
<dbReference type="GO" id="GO:0043231">
    <property type="term" value="C:intracellular membrane-bounded organelle"/>
    <property type="evidence" value="ECO:0000318"/>
    <property type="project" value="GO_Central"/>
</dbReference>
<dbReference type="GO" id="GO:0018685">
    <property type="term" value="F:alkane 1-monooxygenase activity"/>
    <property type="evidence" value="ECO:0000315"/>
    <property type="project" value="RGD"/>
</dbReference>
<dbReference type="GO" id="GO:0008391">
    <property type="term" value="F:arachidonate monooxygenase activity"/>
    <property type="evidence" value="ECO:0000315"/>
    <property type="project" value="RGD"/>
</dbReference>
<dbReference type="GO" id="GO:0020037">
    <property type="term" value="F:heme binding"/>
    <property type="evidence" value="ECO:0007669"/>
    <property type="project" value="InterPro"/>
</dbReference>
<dbReference type="GO" id="GO:0005506">
    <property type="term" value="F:iron ion binding"/>
    <property type="evidence" value="ECO:0007669"/>
    <property type="project" value="InterPro"/>
</dbReference>
<dbReference type="GO" id="GO:0102033">
    <property type="term" value="F:long-chain fatty acid omega-hydroxylase activity"/>
    <property type="evidence" value="ECO:0007669"/>
    <property type="project" value="UniProtKB-EC"/>
</dbReference>
<dbReference type="GO" id="GO:0019369">
    <property type="term" value="P:arachidonate metabolic process"/>
    <property type="evidence" value="ECO:0000315"/>
    <property type="project" value="RGD"/>
</dbReference>
<dbReference type="GO" id="GO:0046456">
    <property type="term" value="P:icosanoid biosynthetic process"/>
    <property type="evidence" value="ECO:0000315"/>
    <property type="project" value="RGD"/>
</dbReference>
<dbReference type="GO" id="GO:0001822">
    <property type="term" value="P:kidney development"/>
    <property type="evidence" value="ECO:0000270"/>
    <property type="project" value="RGD"/>
</dbReference>
<dbReference type="GO" id="GO:0048252">
    <property type="term" value="P:lauric acid metabolic process"/>
    <property type="evidence" value="ECO:0000314"/>
    <property type="project" value="RGD"/>
</dbReference>
<dbReference type="GO" id="GO:0043651">
    <property type="term" value="P:linoleic acid metabolic process"/>
    <property type="evidence" value="ECO:0000314"/>
    <property type="project" value="RGD"/>
</dbReference>
<dbReference type="GO" id="GO:1904681">
    <property type="term" value="P:response to 3-methylcholanthrene"/>
    <property type="evidence" value="ECO:0000270"/>
    <property type="project" value="RGD"/>
</dbReference>
<dbReference type="CDD" id="cd20678">
    <property type="entry name" value="CYP4B-like"/>
    <property type="match status" value="1"/>
</dbReference>
<dbReference type="FunFam" id="1.10.630.10:FF:000005">
    <property type="entry name" value="cytochrome P450 4F22 isoform X2"/>
    <property type="match status" value="1"/>
</dbReference>
<dbReference type="Gene3D" id="1.10.630.10">
    <property type="entry name" value="Cytochrome P450"/>
    <property type="match status" value="1"/>
</dbReference>
<dbReference type="InterPro" id="IPR001128">
    <property type="entry name" value="Cyt_P450"/>
</dbReference>
<dbReference type="InterPro" id="IPR017972">
    <property type="entry name" value="Cyt_P450_CS"/>
</dbReference>
<dbReference type="InterPro" id="IPR002401">
    <property type="entry name" value="Cyt_P450_E_grp-I"/>
</dbReference>
<dbReference type="InterPro" id="IPR036396">
    <property type="entry name" value="Cyt_P450_sf"/>
</dbReference>
<dbReference type="InterPro" id="IPR050196">
    <property type="entry name" value="Cytochrome_P450_Monoox"/>
</dbReference>
<dbReference type="PANTHER" id="PTHR24291:SF47">
    <property type="entry name" value="CYTOCHROME P450 4A14-RELATED"/>
    <property type="match status" value="1"/>
</dbReference>
<dbReference type="PANTHER" id="PTHR24291">
    <property type="entry name" value="CYTOCHROME P450 FAMILY 4"/>
    <property type="match status" value="1"/>
</dbReference>
<dbReference type="Pfam" id="PF00067">
    <property type="entry name" value="p450"/>
    <property type="match status" value="1"/>
</dbReference>
<dbReference type="PRINTS" id="PR00463">
    <property type="entry name" value="EP450I"/>
</dbReference>
<dbReference type="PRINTS" id="PR00385">
    <property type="entry name" value="P450"/>
</dbReference>
<dbReference type="SUPFAM" id="SSF48264">
    <property type="entry name" value="Cytochrome P450"/>
    <property type="match status" value="1"/>
</dbReference>
<dbReference type="PROSITE" id="PS00086">
    <property type="entry name" value="CYTOCHROME_P450"/>
    <property type="match status" value="1"/>
</dbReference>
<protein>
    <recommendedName>
        <fullName>Cytochrome P450 4A14</fullName>
    </recommendedName>
    <alternativeName>
        <fullName>CYPIVA14</fullName>
    </alternativeName>
    <alternativeName>
        <fullName>Cytochrome P450-LA-omega 3</fullName>
    </alternativeName>
    <alternativeName>
        <fullName>Lauric acid omega-hydroxylase</fullName>
    </alternativeName>
    <alternativeName>
        <fullName>Long-chain fatty acid omega-monooxygenase</fullName>
        <ecNumber evidence="1">1.14.14.80</ecNumber>
    </alternativeName>
</protein>
<proteinExistence type="evidence at protein level"/>
<sequence length="507" mass="58232">MGFSVFTPTRSLDGVSGFFQGAFLLSLFLVLFKAVQFYLRRQWLLKALEKFPSTPSHWLWGHDLKDREFQQVLTWVEKFPGACLQWLSGSKTRVLLYDPDYVKVVLGRSDPKASGIYQFLAPWIGYGLLLLNGKKWFQHRRMLTPAFHYGILKPYVKIMADSVNIMLDKWEKLDDQDHPLEIFHYVSLMTLDTVMKCAFSHQGSVQLDVNSRSYTKAVEDLNNLTFFRVRSAFYGNSIIYNMSSDGRLSRRACQIAHEHTDGVIKMRKAQLQNEEELQKARKKRHLDFLDILLFAKMEDGKSLSDEDLRAEVDTFMFEGHDTTASGISWVFYALATHPEHQERCREEVQSILGDGTSVTWDHLDQIPYTTMCIKEALRLYPPVPSVSRELSSPVTFPDGRSIPKGITTTILIYGLHHNPSYWPNPKVFDPSRFSPDSPRHSHAYLPFSGGARNCIGKQFAMNELKVAVALTLLRFELLPDPTRIPVPMARLVLKSKNGIHLRLKKLR</sequence>
<accession>P20817</accession>
<feature type="propeptide" id="PRO_0000003569" description="Removed in mature form" evidence="5">
    <location>
        <begin position="1"/>
        <end position="4"/>
    </location>
</feature>
<feature type="chain" id="PRO_0000003570" description="Cytochrome P450 4A14">
    <location>
        <begin position="5"/>
        <end position="507"/>
    </location>
</feature>
<feature type="binding site" description="covalent" evidence="3 4">
    <location>
        <position position="318"/>
    </location>
    <ligand>
        <name>heme</name>
        <dbReference type="ChEBI" id="CHEBI:30413"/>
    </ligand>
</feature>
<feature type="binding site" description="axial binding residue" evidence="3 4">
    <location>
        <position position="454"/>
    </location>
    <ligand>
        <name>heme</name>
        <dbReference type="ChEBI" id="CHEBI:30413"/>
    </ligand>
    <ligandPart>
        <name>Fe</name>
        <dbReference type="ChEBI" id="CHEBI:18248"/>
    </ligandPart>
</feature>
<feature type="modified residue" description="Phosphoserine" evidence="10">
    <location>
        <position position="437"/>
    </location>
</feature>
<feature type="mutagenesis site" description="Has no significant effect on the catalytic activity toward lauric and myristic acids." evidence="2">
    <original>D</original>
    <variation>N</variation>
    <location>
        <position position="63"/>
    </location>
</feature>
<feature type="mutagenesis site" description="Impairs substrate binding." evidence="2">
    <original>K</original>
    <variation>T</variation>
    <location>
        <position position="91"/>
    </location>
</feature>
<feature type="mutagenesis site" description="Has no significant effect on the catalytic activity toward lauric and myristic acids.">
    <original>T</original>
    <variation>A</variation>
    <location>
        <position position="92"/>
    </location>
</feature>
<feature type="mutagenesis site" description="70-fold increase of the binding constant for lauric acid associated with higher catalytic activity." evidence="2">
    <original>A</original>
    <variation>P</variation>
    <location>
        <position position="113"/>
    </location>
</feature>
<feature type="mutagenesis site" description="Higher kcat for hydroxylation of lauric acid. 2-fold increase of omega/(omega-1) hydroxylation ratio for lauric and myristic acids; when associated with S-119." evidence="2">
    <location>
        <begin position="114"/>
        <end position="116"/>
    </location>
</feature>
<feature type="mutagenesis site" description="7-fold increase of the binding constant for lauric acid associated with higher catalytic activity. 2-fold increase of omega/omega-1 hydroxylation ratio for lauric and myristic acids; when associated with S114_I116del." evidence="2">
    <original>F</original>
    <variation>S</variation>
    <location>
        <position position="119"/>
    </location>
</feature>
<feature type="mutagenesis site" description="Loss of covalent heme binding." evidence="4">
    <original>E</original>
    <variation>A</variation>
    <location>
        <position position="318"/>
    </location>
</feature>
<feature type="mutagenesis site" description="Significant reduction in covalent heme binding." evidence="4">
    <original>E</original>
    <variation>D</variation>
    <location>
        <position position="318"/>
    </location>
</feature>
<feature type="mutagenesis site" description="Significant reduction in covalent heme binding." evidence="4">
    <original>E</original>
    <variation>Q</variation>
    <location>
        <position position="318"/>
    </location>
</feature>
<evidence type="ECO:0000250" key="1">
    <source>
        <dbReference type="UniProtKB" id="Q02928"/>
    </source>
</evidence>
<evidence type="ECO:0000269" key="2">
    <source>
    </source>
</evidence>
<evidence type="ECO:0000269" key="3">
    <source>
    </source>
</evidence>
<evidence type="ECO:0000269" key="4">
    <source>
    </source>
</evidence>
<evidence type="ECO:0000269" key="5">
    <source>
    </source>
</evidence>
<evidence type="ECO:0000303" key="6">
    <source>
    </source>
</evidence>
<evidence type="ECO:0000305" key="7"/>
<evidence type="ECO:0000305" key="8">
    <source>
    </source>
</evidence>
<evidence type="ECO:0000312" key="9">
    <source>
        <dbReference type="RGD" id="631356"/>
    </source>
</evidence>
<evidence type="ECO:0007744" key="10">
    <source>
    </source>
</evidence>
<comment type="function">
    <text evidence="2">A cytochrome P450 monooxygenase that catalyzes omega and omega-1 hydroxylation of saturated fatty acids. Exhibits preferential omega versus omega-1 regioselectivity and (R) versus (S) stereoselectivity for hydroxylation of dodecanoic (lauric) acid. Mechanistically, uses molecular oxygen inserting one oxygen atom into a substrate, and reducing the second into a water molecule, with two electrons provided by NADPH via cytochrome P450 reductase (CPR; NADPH-ferrihemoprotein reductase).</text>
</comment>
<comment type="catalytic activity">
    <reaction evidence="2">
        <text>an omega-methyl-long-chain fatty acid + reduced [NADPH--hemoprotein reductase] + O2 = an omega-hydroxy-long-chain fatty acid + oxidized [NADPH--hemoprotein reductase] + H2O + H(+)</text>
        <dbReference type="Rhea" id="RHEA:56748"/>
        <dbReference type="Rhea" id="RHEA-COMP:11964"/>
        <dbReference type="Rhea" id="RHEA-COMP:11965"/>
        <dbReference type="ChEBI" id="CHEBI:15377"/>
        <dbReference type="ChEBI" id="CHEBI:15378"/>
        <dbReference type="ChEBI" id="CHEBI:15379"/>
        <dbReference type="ChEBI" id="CHEBI:57618"/>
        <dbReference type="ChEBI" id="CHEBI:58210"/>
        <dbReference type="ChEBI" id="CHEBI:140991"/>
        <dbReference type="ChEBI" id="CHEBI:140992"/>
        <dbReference type="EC" id="1.14.14.80"/>
    </reaction>
</comment>
<comment type="catalytic activity">
    <reaction evidence="2">
        <text>dodecanoate + reduced [NADPH--hemoprotein reductase] + O2 = (11R)-hydroxydodecanoate + oxidized [NADPH--hemoprotein reductase] + H2O + H(+)</text>
        <dbReference type="Rhea" id="RHEA:41724"/>
        <dbReference type="Rhea" id="RHEA-COMP:11964"/>
        <dbReference type="Rhea" id="RHEA-COMP:11965"/>
        <dbReference type="ChEBI" id="CHEBI:15377"/>
        <dbReference type="ChEBI" id="CHEBI:15378"/>
        <dbReference type="ChEBI" id="CHEBI:15379"/>
        <dbReference type="ChEBI" id="CHEBI:18262"/>
        <dbReference type="ChEBI" id="CHEBI:57618"/>
        <dbReference type="ChEBI" id="CHEBI:58210"/>
        <dbReference type="ChEBI" id="CHEBI:78423"/>
    </reaction>
    <physiologicalReaction direction="left-to-right" evidence="8">
        <dbReference type="Rhea" id="RHEA:41725"/>
    </physiologicalReaction>
</comment>
<comment type="catalytic activity">
    <reaction evidence="2">
        <text>dodecanoate + reduced [NADPH--hemoprotein reductase] + O2 = 12-hydroxydodecanoate + oxidized [NADPH--hemoprotein reductase] + H2O + H(+)</text>
        <dbReference type="Rhea" id="RHEA:38947"/>
        <dbReference type="Rhea" id="RHEA-COMP:11964"/>
        <dbReference type="Rhea" id="RHEA-COMP:11965"/>
        <dbReference type="ChEBI" id="CHEBI:15377"/>
        <dbReference type="ChEBI" id="CHEBI:15378"/>
        <dbReference type="ChEBI" id="CHEBI:15379"/>
        <dbReference type="ChEBI" id="CHEBI:18262"/>
        <dbReference type="ChEBI" id="CHEBI:36204"/>
        <dbReference type="ChEBI" id="CHEBI:57618"/>
        <dbReference type="ChEBI" id="CHEBI:58210"/>
    </reaction>
    <physiologicalReaction direction="left-to-right" evidence="8">
        <dbReference type="Rhea" id="RHEA:38948"/>
    </physiologicalReaction>
</comment>
<comment type="catalytic activity">
    <reaction evidence="2">
        <text>tetradecanoate + reduced [NADPH--hemoprotein reductase] + O2 = 14-hydroxytetradecanoate + oxidized [NADPH--hemoprotein reductase] + H2O + H(+)</text>
        <dbReference type="Rhea" id="RHEA:40203"/>
        <dbReference type="Rhea" id="RHEA-COMP:11964"/>
        <dbReference type="Rhea" id="RHEA-COMP:11965"/>
        <dbReference type="ChEBI" id="CHEBI:15377"/>
        <dbReference type="ChEBI" id="CHEBI:15378"/>
        <dbReference type="ChEBI" id="CHEBI:15379"/>
        <dbReference type="ChEBI" id="CHEBI:30807"/>
        <dbReference type="ChEBI" id="CHEBI:57618"/>
        <dbReference type="ChEBI" id="CHEBI:58210"/>
        <dbReference type="ChEBI" id="CHEBI:77033"/>
    </reaction>
    <physiologicalReaction direction="left-to-right" evidence="8">
        <dbReference type="Rhea" id="RHEA:40204"/>
    </physiologicalReaction>
</comment>
<comment type="cofactor">
    <cofactor evidence="3 4">
        <name>heme</name>
        <dbReference type="ChEBI" id="CHEBI:30413"/>
    </cofactor>
</comment>
<comment type="pathway">
    <text evidence="8">Lipid metabolism; fatty acid metabolism.</text>
</comment>
<comment type="subcellular location">
    <subcellularLocation>
        <location>Endoplasmic reticulum membrane</location>
        <topology>Peripheral membrane protein</topology>
    </subcellularLocation>
    <subcellularLocation>
        <location>Microsome membrane</location>
        <topology>Peripheral membrane protein</topology>
    </subcellularLocation>
</comment>
<comment type="induction">
    <text>By clofibrate.</text>
</comment>
<comment type="similarity">
    <text evidence="7">Belongs to the cytochrome P450 family.</text>
</comment>
<reference key="1">
    <citation type="journal article" date="1989" name="DNA">
        <title>The rat clofibrate-inducible CYP4A subfamily. II. cDNA sequence of IVA3, mapping of the Cyp4a locus to mouse chromosome 4, and coordinate and tissue-specific regulation of the CYP4A genes.</title>
        <authorList>
            <person name="Kimura S."/>
            <person name="Hardwick J.P."/>
            <person name="Kozak C.A."/>
            <person name="Gonzalez F.J."/>
        </authorList>
    </citation>
    <scope>NUCLEOTIDE SEQUENCE [MRNA]</scope>
    <source>
        <tissue>Liver</tissue>
    </source>
</reference>
<reference key="2">
    <citation type="journal article" date="1988" name="Biochem. Biophys. Res. Commun.">
        <title>Induction of renal cytochrome P-450 in hepatic microsomes of diabetic rats.</title>
        <authorList>
            <person name="Imaoka S."/>
            <person name="Shimojo N."/>
            <person name="Funae Y."/>
        </authorList>
    </citation>
    <scope>PROTEIN SEQUENCE OF 5-19</scope>
</reference>
<reference key="3">
    <citation type="journal article" date="2000" name="J. Biol. Chem.">
        <title>Molecular basis for the omega-regiospecificity of the CYP4A2 and CYP4A3 fatty acid hydroxylases.</title>
        <authorList>
            <person name="Hoch U."/>
            <person name="Falck J.R."/>
            <person name="de Montellano P.R."/>
        </authorList>
    </citation>
    <scope>FUNCTION</scope>
    <scope>CATALYTIC ACTIVITY</scope>
    <scope>MUTAGENESIS OF ASP-63; LYS-91; THR-92; ALA-113; 114-SER--ILE-116 AND PHE-119</scope>
    <scope>PATHWAY</scope>
</reference>
<reference key="4">
    <citation type="journal article" date="2001" name="J. Biol. Chem.">
        <title>Covalently linked heme in cytochrome P4504A fatty acid hydroxylases.</title>
        <authorList>
            <person name="Hoch U."/>
            <person name="Ortiz de Montellano P.R."/>
        </authorList>
    </citation>
    <scope>COVALENT HEME ATTACHMENT</scope>
</reference>
<reference key="5">
    <citation type="journal article" date="2002" name="J. Biol. Chem.">
        <title>Autocatalytic mechanism and consequences of covalent heme attachment in the cytochrome P4504A family.</title>
        <authorList>
            <person name="LeBrun L.A."/>
            <person name="Hoch U."/>
            <person name="Ortiz de Montellano P.R."/>
        </authorList>
    </citation>
    <scope>COVALENT HEME ATTACHMENT</scope>
    <scope>MUTAGENESIS OF GLU-318</scope>
</reference>
<reference key="6">
    <citation type="journal article" date="2012" name="Nat. Commun.">
        <title>Quantitative maps of protein phosphorylation sites across 14 different rat organs and tissues.</title>
        <authorList>
            <person name="Lundby A."/>
            <person name="Secher A."/>
            <person name="Lage K."/>
            <person name="Nordsborg N.B."/>
            <person name="Dmytriyev A."/>
            <person name="Lundby C."/>
            <person name="Olsen J.V."/>
        </authorList>
    </citation>
    <scope>PHOSPHORYLATION [LARGE SCALE ANALYSIS] AT SER-437</scope>
    <scope>IDENTIFICATION BY MASS SPECTROMETRY [LARGE SCALE ANALYSIS]</scope>
</reference>